<evidence type="ECO:0000250" key="1">
    <source>
        <dbReference type="UniProtKB" id="P0C1A7"/>
    </source>
</evidence>
<evidence type="ECO:0000255" key="2"/>
<evidence type="ECO:0000305" key="3"/>
<organism>
    <name type="scientific">Dickeya chrysanthemi</name>
    <name type="common">Pectobacterium chrysanthemi</name>
    <name type="synonym">Erwinia chrysanthemi</name>
    <dbReference type="NCBI Taxonomy" id="556"/>
    <lineage>
        <taxon>Bacteria</taxon>
        <taxon>Pseudomonadati</taxon>
        <taxon>Pseudomonadota</taxon>
        <taxon>Gammaproteobacteria</taxon>
        <taxon>Enterobacterales</taxon>
        <taxon>Pectobacteriaceae</taxon>
        <taxon>Dickeya</taxon>
    </lineage>
</organism>
<protein>
    <recommendedName>
        <fullName evidence="1">Pectate lyase L</fullName>
        <ecNumber evidence="1">4.2.2.2</ecNumber>
    </recommendedName>
    <alternativeName>
        <fullName evidence="1">Pectate transeliminase</fullName>
    </alternativeName>
</protein>
<feature type="signal peptide" evidence="2">
    <location>
        <begin position="1"/>
        <end position="25"/>
    </location>
</feature>
<feature type="chain" id="PRO_0000024936" description="Pectate lyase L">
    <location>
        <begin position="26"/>
        <end position="425"/>
    </location>
</feature>
<feature type="active site" description="Proton acceptor" evidence="1">
    <location>
        <position position="273"/>
    </location>
</feature>
<feature type="binding site" evidence="1">
    <location>
        <position position="209"/>
    </location>
    <ligand>
        <name>Ca(2+)</name>
        <dbReference type="ChEBI" id="CHEBI:29108"/>
        <label>1</label>
    </ligand>
</feature>
<feature type="binding site" evidence="1">
    <location>
        <position position="233"/>
    </location>
    <ligand>
        <name>Ca(2+)</name>
        <dbReference type="ChEBI" id="CHEBI:29108"/>
        <label>1</label>
    </ligand>
</feature>
<feature type="binding site" evidence="1">
    <location>
        <position position="234"/>
    </location>
    <ligand>
        <name>Ca(2+)</name>
        <dbReference type="ChEBI" id="CHEBI:29108"/>
        <label>1</label>
    </ligand>
</feature>
<feature type="binding site" evidence="1">
    <location>
        <position position="237"/>
    </location>
    <ligand>
        <name>Ca(2+)</name>
        <dbReference type="ChEBI" id="CHEBI:29108"/>
        <label>1</label>
    </ligand>
</feature>
<feature type="binding site" evidence="1">
    <location>
        <position position="402"/>
    </location>
    <ligand>
        <name>Ca(2+)</name>
        <dbReference type="ChEBI" id="CHEBI:29108"/>
        <label>2</label>
    </ligand>
</feature>
<feature type="binding site" evidence="1">
    <location>
        <position position="413"/>
    </location>
    <ligand>
        <name>Ca(2+)</name>
        <dbReference type="ChEBI" id="CHEBI:29108"/>
        <label>2</label>
    </ligand>
</feature>
<feature type="binding site" evidence="1">
    <location>
        <position position="416"/>
    </location>
    <ligand>
        <name>Ca(2+)</name>
        <dbReference type="ChEBI" id="CHEBI:29108"/>
        <label>2</label>
    </ligand>
</feature>
<feature type="binding site" evidence="1">
    <location>
        <position position="418"/>
    </location>
    <ligand>
        <name>Ca(2+)</name>
        <dbReference type="ChEBI" id="CHEBI:29108"/>
        <label>2</label>
    </ligand>
</feature>
<feature type="binding site" evidence="1">
    <location>
        <position position="423"/>
    </location>
    <ligand>
        <name>Ca(2+)</name>
        <dbReference type="ChEBI" id="CHEBI:29108"/>
        <label>2</label>
    </ligand>
</feature>
<feature type="disulfide bond" evidence="1">
    <location>
        <begin position="28"/>
        <end position="114"/>
    </location>
</feature>
<gene>
    <name type="primary">pelL</name>
</gene>
<sequence>MKYLNCFISTGLAAFFLVNSTSVLAADCSSDLTSGISTKRIYYVAPNGSSSNNGNSFNSPMSFTAAMAAANPGELILLKPGTYTIPYTQGKGNTITFNKSGKEGSPIYVAAANCGRAVFDFSFPDSQWVQASYGFYVTGDYWYFKGIEVTRAGYQGAYVTGSHNTFENTAFHHNRNTGLEINNGGSYNTVINSDAYRNYDPKKNGSMADGFGPKQKQGQGNRFGGCRAWENSDDGFDLFDSPQKVVIENSWAFRNGINYWSDSSFAGNGNGFKLGGNQAVGNHRITRSVAFGNVSKGFDQNNNAGGVTVINNTSYKNGINYGFGSNVKSGQKHYFRNNVSLSGSATVNNADAKSNSWDTGPVASASDFVSLDTSLATISRDNDGTLPETALFRLSTNSKLINAGTKESNISYSGSAPDLGAFERN</sequence>
<dbReference type="EC" id="4.2.2.2" evidence="1"/>
<dbReference type="EMBL" id="L42248">
    <property type="protein sequence ID" value="AAA99476.1"/>
    <property type="molecule type" value="Genomic_DNA"/>
</dbReference>
<dbReference type="SMR" id="P0C1A6"/>
<dbReference type="CAZy" id="PL9">
    <property type="family name" value="Polysaccharide Lyase Family 9"/>
</dbReference>
<dbReference type="UniPathway" id="UPA00545">
    <property type="reaction ID" value="UER00824"/>
</dbReference>
<dbReference type="GO" id="GO:0005576">
    <property type="term" value="C:extracellular region"/>
    <property type="evidence" value="ECO:0007669"/>
    <property type="project" value="UniProtKB-SubCell"/>
</dbReference>
<dbReference type="GO" id="GO:0046872">
    <property type="term" value="F:metal ion binding"/>
    <property type="evidence" value="ECO:0007669"/>
    <property type="project" value="UniProtKB-KW"/>
</dbReference>
<dbReference type="GO" id="GO:0030570">
    <property type="term" value="F:pectate lyase activity"/>
    <property type="evidence" value="ECO:0007669"/>
    <property type="project" value="UniProtKB-EC"/>
</dbReference>
<dbReference type="GO" id="GO:0045490">
    <property type="term" value="P:pectin catabolic process"/>
    <property type="evidence" value="ECO:0007669"/>
    <property type="project" value="UniProtKB-UniPathway"/>
</dbReference>
<dbReference type="Gene3D" id="2.160.20.10">
    <property type="entry name" value="Single-stranded right-handed beta-helix, Pectin lyase-like"/>
    <property type="match status" value="1"/>
</dbReference>
<dbReference type="InterPro" id="IPR012334">
    <property type="entry name" value="Pectin_lyas_fold"/>
</dbReference>
<dbReference type="InterPro" id="IPR011050">
    <property type="entry name" value="Pectin_lyase_fold/virulence"/>
</dbReference>
<dbReference type="InterPro" id="IPR053868">
    <property type="entry name" value="Pel9A-like_beta_helix"/>
</dbReference>
<dbReference type="InterPro" id="IPR052052">
    <property type="entry name" value="Polysaccharide_Lyase_9"/>
</dbReference>
<dbReference type="PANTHER" id="PTHR40088">
    <property type="entry name" value="PECTATE LYASE (EUROFUNG)"/>
    <property type="match status" value="1"/>
</dbReference>
<dbReference type="PANTHER" id="PTHR40088:SF1">
    <property type="entry name" value="PECTATE LYASE PEL9"/>
    <property type="match status" value="1"/>
</dbReference>
<dbReference type="Pfam" id="PF22842">
    <property type="entry name" value="Pel9A-like_beta_helix"/>
    <property type="match status" value="1"/>
</dbReference>
<dbReference type="SUPFAM" id="SSF51126">
    <property type="entry name" value="Pectin lyase-like"/>
    <property type="match status" value="1"/>
</dbReference>
<accession>P0C1A6</accession>
<accession>Q47473</accession>
<accession>Q59421</accession>
<comment type="function">
    <text evidence="1">Presents an endo-cleaving activity on polygalacturonate or partially methylated pectin.</text>
</comment>
<comment type="catalytic activity">
    <reaction evidence="1">
        <text>Eliminative cleavage of (1-&gt;4)-alpha-D-galacturonan to give oligosaccharides with 4-deoxy-alpha-D-galact-4-enuronosyl groups at their non-reducing ends.</text>
        <dbReference type="EC" id="4.2.2.2"/>
    </reaction>
</comment>
<comment type="cofactor">
    <cofactor evidence="1">
        <name>Ca(2+)</name>
        <dbReference type="ChEBI" id="CHEBI:29108"/>
    </cofactor>
</comment>
<comment type="pathway">
    <text evidence="1">Glycan metabolism; pectin degradation; 2-dehydro-3-deoxy-D-gluconate from pectin: step 2/5.</text>
</comment>
<comment type="subcellular location">
    <subcellularLocation>
        <location evidence="1">Secreted</location>
    </subcellularLocation>
</comment>
<comment type="similarity">
    <text evidence="3">Belongs to the polysaccharide lyase 9 family.</text>
</comment>
<reference key="1">
    <citation type="journal article" date="1995" name="J. Bacteriol.">
        <title>Use of Tn5tac1 to clone a pel gene encoding a highly alkaline, asparagine-rich pectate lyase isozyme from an Erwinia chrysanthemi EC16 mutant with deletions affecting the major pectate lyase isozymes.</title>
        <authorList>
            <person name="Alfano J.R."/>
            <person name="Ham J.H."/>
            <person name="Collmer A."/>
        </authorList>
    </citation>
    <scope>NUCLEOTIDE SEQUENCE [GENOMIC DNA]</scope>
    <source>
        <strain>EC16</strain>
    </source>
</reference>
<name>PLYL_DICCH</name>
<proteinExistence type="inferred from homology"/>
<keyword id="KW-0106">Calcium</keyword>
<keyword id="KW-1015">Disulfide bond</keyword>
<keyword id="KW-0456">Lyase</keyword>
<keyword id="KW-0479">Metal-binding</keyword>
<keyword id="KW-0964">Secreted</keyword>
<keyword id="KW-0732">Signal</keyword>